<gene>
    <name evidence="1" type="primary">rlmD</name>
    <name type="synonym">rumA</name>
    <name type="ordered locus">ABO_1624</name>
</gene>
<keyword id="KW-0004">4Fe-4S</keyword>
<keyword id="KW-0408">Iron</keyword>
<keyword id="KW-0411">Iron-sulfur</keyword>
<keyword id="KW-0479">Metal-binding</keyword>
<keyword id="KW-0489">Methyltransferase</keyword>
<keyword id="KW-1185">Reference proteome</keyword>
<keyword id="KW-0698">rRNA processing</keyword>
<keyword id="KW-0949">S-adenosyl-L-methionine</keyword>
<keyword id="KW-0808">Transferase</keyword>
<accession>Q0VP26</accession>
<comment type="function">
    <text evidence="1">Catalyzes the formation of 5-methyl-uridine at position 1939 (m5U1939) in 23S rRNA.</text>
</comment>
<comment type="catalytic activity">
    <reaction evidence="1">
        <text>uridine(1939) in 23S rRNA + S-adenosyl-L-methionine = 5-methyluridine(1939) in 23S rRNA + S-adenosyl-L-homocysteine + H(+)</text>
        <dbReference type="Rhea" id="RHEA:42908"/>
        <dbReference type="Rhea" id="RHEA-COMP:10278"/>
        <dbReference type="Rhea" id="RHEA-COMP:10279"/>
        <dbReference type="ChEBI" id="CHEBI:15378"/>
        <dbReference type="ChEBI" id="CHEBI:57856"/>
        <dbReference type="ChEBI" id="CHEBI:59789"/>
        <dbReference type="ChEBI" id="CHEBI:65315"/>
        <dbReference type="ChEBI" id="CHEBI:74447"/>
        <dbReference type="EC" id="2.1.1.190"/>
    </reaction>
</comment>
<comment type="similarity">
    <text evidence="1">Belongs to the class I-like SAM-binding methyltransferase superfamily. RNA M5U methyltransferase family. RlmD subfamily.</text>
</comment>
<evidence type="ECO:0000255" key="1">
    <source>
        <dbReference type="HAMAP-Rule" id="MF_01010"/>
    </source>
</evidence>
<evidence type="ECO:0000256" key="2">
    <source>
        <dbReference type="SAM" id="MobiDB-lite"/>
    </source>
</evidence>
<organism>
    <name type="scientific">Alcanivorax borkumensis (strain ATCC 700651 / DSM 11573 / NCIMB 13689 / SK2)</name>
    <dbReference type="NCBI Taxonomy" id="393595"/>
    <lineage>
        <taxon>Bacteria</taxon>
        <taxon>Pseudomonadati</taxon>
        <taxon>Pseudomonadota</taxon>
        <taxon>Gammaproteobacteria</taxon>
        <taxon>Oceanospirillales</taxon>
        <taxon>Alcanivoracaceae</taxon>
        <taxon>Alcanivorax</taxon>
    </lineage>
</organism>
<feature type="chain" id="PRO_0000282027" description="23S rRNA (uracil(1939)-C(5))-methyltransferase RlmD">
    <location>
        <begin position="1"/>
        <end position="445"/>
    </location>
</feature>
<feature type="domain" description="TRAM" evidence="1">
    <location>
        <begin position="5"/>
        <end position="64"/>
    </location>
</feature>
<feature type="region of interest" description="Disordered" evidence="2">
    <location>
        <begin position="1"/>
        <end position="21"/>
    </location>
</feature>
<feature type="active site" description="Nucleophile" evidence="1">
    <location>
        <position position="399"/>
    </location>
</feature>
<feature type="binding site" evidence="1">
    <location>
        <position position="77"/>
    </location>
    <ligand>
        <name>[4Fe-4S] cluster</name>
        <dbReference type="ChEBI" id="CHEBI:49883"/>
    </ligand>
</feature>
<feature type="binding site" evidence="1">
    <location>
        <position position="83"/>
    </location>
    <ligand>
        <name>[4Fe-4S] cluster</name>
        <dbReference type="ChEBI" id="CHEBI:49883"/>
    </ligand>
</feature>
<feature type="binding site" evidence="1">
    <location>
        <position position="86"/>
    </location>
    <ligand>
        <name>[4Fe-4S] cluster</name>
        <dbReference type="ChEBI" id="CHEBI:49883"/>
    </ligand>
</feature>
<feature type="binding site" evidence="1">
    <location>
        <position position="165"/>
    </location>
    <ligand>
        <name>[4Fe-4S] cluster</name>
        <dbReference type="ChEBI" id="CHEBI:49883"/>
    </ligand>
</feature>
<feature type="binding site" evidence="1">
    <location>
        <position position="275"/>
    </location>
    <ligand>
        <name>S-adenosyl-L-methionine</name>
        <dbReference type="ChEBI" id="CHEBI:59789"/>
    </ligand>
</feature>
<feature type="binding site" evidence="1">
    <location>
        <position position="304"/>
    </location>
    <ligand>
        <name>S-adenosyl-L-methionine</name>
        <dbReference type="ChEBI" id="CHEBI:59789"/>
    </ligand>
</feature>
<feature type="binding site" evidence="1">
    <location>
        <position position="309"/>
    </location>
    <ligand>
        <name>S-adenosyl-L-methionine</name>
        <dbReference type="ChEBI" id="CHEBI:59789"/>
    </ligand>
</feature>
<feature type="binding site" evidence="1">
    <location>
        <position position="325"/>
    </location>
    <ligand>
        <name>S-adenosyl-L-methionine</name>
        <dbReference type="ChEBI" id="CHEBI:59789"/>
    </ligand>
</feature>
<feature type="binding site" evidence="1">
    <location>
        <position position="352"/>
    </location>
    <ligand>
        <name>S-adenosyl-L-methionine</name>
        <dbReference type="ChEBI" id="CHEBI:59789"/>
    </ligand>
</feature>
<feature type="binding site" evidence="1">
    <location>
        <position position="373"/>
    </location>
    <ligand>
        <name>S-adenosyl-L-methionine</name>
        <dbReference type="ChEBI" id="CHEBI:59789"/>
    </ligand>
</feature>
<protein>
    <recommendedName>
        <fullName evidence="1">23S rRNA (uracil(1939)-C(5))-methyltransferase RlmD</fullName>
        <ecNumber evidence="1">2.1.1.190</ecNumber>
    </recommendedName>
    <alternativeName>
        <fullName evidence="1">23S rRNA(m5U1939)-methyltransferase</fullName>
    </alternativeName>
</protein>
<reference key="1">
    <citation type="journal article" date="2006" name="Nat. Biotechnol.">
        <title>Genome sequence of the ubiquitous hydrocarbon-degrading marine bacterium Alcanivorax borkumensis.</title>
        <authorList>
            <person name="Schneiker S."/>
            <person name="Martins dos Santos V.A.P."/>
            <person name="Bartels D."/>
            <person name="Bekel T."/>
            <person name="Brecht M."/>
            <person name="Buhrmester J."/>
            <person name="Chernikova T.N."/>
            <person name="Denaro R."/>
            <person name="Ferrer M."/>
            <person name="Gertler C."/>
            <person name="Goesmann A."/>
            <person name="Golyshina O.V."/>
            <person name="Kaminski F."/>
            <person name="Khachane A.N."/>
            <person name="Lang S."/>
            <person name="Linke B."/>
            <person name="McHardy A.C."/>
            <person name="Meyer F."/>
            <person name="Nechitaylo T."/>
            <person name="Puehler A."/>
            <person name="Regenhardt D."/>
            <person name="Rupp O."/>
            <person name="Sabirova J.S."/>
            <person name="Selbitschka W."/>
            <person name="Yakimov M.M."/>
            <person name="Timmis K.N."/>
            <person name="Vorhoelter F.-J."/>
            <person name="Weidner S."/>
            <person name="Kaiser O."/>
            <person name="Golyshin P.N."/>
        </authorList>
    </citation>
    <scope>NUCLEOTIDE SEQUENCE [LARGE SCALE GENOMIC DNA]</scope>
    <source>
        <strain>ATCC 700651 / DSM 11573 / NCIMB 13689 / SK2</strain>
    </source>
</reference>
<name>RLMD_ALCBS</name>
<dbReference type="EC" id="2.1.1.190" evidence="1"/>
<dbReference type="EMBL" id="AM286690">
    <property type="protein sequence ID" value="CAL17072.1"/>
    <property type="molecule type" value="Genomic_DNA"/>
</dbReference>
<dbReference type="RefSeq" id="WP_011588905.1">
    <property type="nucleotide sequence ID" value="NC_008260.1"/>
</dbReference>
<dbReference type="SMR" id="Q0VP26"/>
<dbReference type="STRING" id="393595.ABO_1624"/>
<dbReference type="KEGG" id="abo:ABO_1624"/>
<dbReference type="eggNOG" id="COG2265">
    <property type="taxonomic scope" value="Bacteria"/>
</dbReference>
<dbReference type="HOGENOM" id="CLU_014689_8_2_6"/>
<dbReference type="OrthoDB" id="9804590at2"/>
<dbReference type="Proteomes" id="UP000008871">
    <property type="component" value="Chromosome"/>
</dbReference>
<dbReference type="GO" id="GO:0051539">
    <property type="term" value="F:4 iron, 4 sulfur cluster binding"/>
    <property type="evidence" value="ECO:0007669"/>
    <property type="project" value="UniProtKB-KW"/>
</dbReference>
<dbReference type="GO" id="GO:0005506">
    <property type="term" value="F:iron ion binding"/>
    <property type="evidence" value="ECO:0007669"/>
    <property type="project" value="UniProtKB-UniRule"/>
</dbReference>
<dbReference type="GO" id="GO:0003723">
    <property type="term" value="F:RNA binding"/>
    <property type="evidence" value="ECO:0007669"/>
    <property type="project" value="InterPro"/>
</dbReference>
<dbReference type="GO" id="GO:0070041">
    <property type="term" value="F:rRNA (uridine-C5-)-methyltransferase activity"/>
    <property type="evidence" value="ECO:0007669"/>
    <property type="project" value="UniProtKB-UniRule"/>
</dbReference>
<dbReference type="GO" id="GO:0070475">
    <property type="term" value="P:rRNA base methylation"/>
    <property type="evidence" value="ECO:0007669"/>
    <property type="project" value="TreeGrafter"/>
</dbReference>
<dbReference type="CDD" id="cd02440">
    <property type="entry name" value="AdoMet_MTases"/>
    <property type="match status" value="1"/>
</dbReference>
<dbReference type="FunFam" id="3.40.50.150:FF:000009">
    <property type="entry name" value="23S rRNA (Uracil(1939)-C(5))-methyltransferase RlmD"/>
    <property type="match status" value="1"/>
</dbReference>
<dbReference type="FunFam" id="2.40.50.140:FF:000097">
    <property type="entry name" value="23S rRNA (uracil(1939)-C(5))-methyltransferase RlmD"/>
    <property type="match status" value="1"/>
</dbReference>
<dbReference type="Gene3D" id="2.40.50.1070">
    <property type="match status" value="1"/>
</dbReference>
<dbReference type="Gene3D" id="2.40.50.140">
    <property type="entry name" value="Nucleic acid-binding proteins"/>
    <property type="match status" value="1"/>
</dbReference>
<dbReference type="Gene3D" id="3.40.50.150">
    <property type="entry name" value="Vaccinia Virus protein VP39"/>
    <property type="match status" value="1"/>
</dbReference>
<dbReference type="HAMAP" id="MF_01010">
    <property type="entry name" value="23SrRNA_methyltr_RlmD"/>
    <property type="match status" value="1"/>
</dbReference>
<dbReference type="InterPro" id="IPR001566">
    <property type="entry name" value="23S_rRNA_MeTrfase_RlmD"/>
</dbReference>
<dbReference type="InterPro" id="IPR030390">
    <property type="entry name" value="MeTrfase_TrmA_AS"/>
</dbReference>
<dbReference type="InterPro" id="IPR030391">
    <property type="entry name" value="MeTrfase_TrmA_CS"/>
</dbReference>
<dbReference type="InterPro" id="IPR012340">
    <property type="entry name" value="NA-bd_OB-fold"/>
</dbReference>
<dbReference type="InterPro" id="IPR029063">
    <property type="entry name" value="SAM-dependent_MTases_sf"/>
</dbReference>
<dbReference type="InterPro" id="IPR002792">
    <property type="entry name" value="TRAM_dom"/>
</dbReference>
<dbReference type="InterPro" id="IPR010280">
    <property type="entry name" value="U5_MeTrfase_fam"/>
</dbReference>
<dbReference type="NCBIfam" id="NF009639">
    <property type="entry name" value="PRK13168.1"/>
    <property type="match status" value="1"/>
</dbReference>
<dbReference type="NCBIfam" id="TIGR00479">
    <property type="entry name" value="rumA"/>
    <property type="match status" value="1"/>
</dbReference>
<dbReference type="PANTHER" id="PTHR11061:SF49">
    <property type="entry name" value="23S RRNA (URACIL(1939)-C(5))-METHYLTRANSFERASE RLMD"/>
    <property type="match status" value="1"/>
</dbReference>
<dbReference type="PANTHER" id="PTHR11061">
    <property type="entry name" value="RNA M5U METHYLTRANSFERASE"/>
    <property type="match status" value="1"/>
</dbReference>
<dbReference type="Pfam" id="PF01938">
    <property type="entry name" value="TRAM"/>
    <property type="match status" value="1"/>
</dbReference>
<dbReference type="Pfam" id="PF05958">
    <property type="entry name" value="tRNA_U5-meth_tr"/>
    <property type="match status" value="1"/>
</dbReference>
<dbReference type="SUPFAM" id="SSF50249">
    <property type="entry name" value="Nucleic acid-binding proteins"/>
    <property type="match status" value="1"/>
</dbReference>
<dbReference type="SUPFAM" id="SSF53335">
    <property type="entry name" value="S-adenosyl-L-methionine-dependent methyltransferases"/>
    <property type="match status" value="1"/>
</dbReference>
<dbReference type="PROSITE" id="PS51687">
    <property type="entry name" value="SAM_MT_RNA_M5U"/>
    <property type="match status" value="1"/>
</dbReference>
<dbReference type="PROSITE" id="PS50926">
    <property type="entry name" value="TRAM"/>
    <property type="match status" value="1"/>
</dbReference>
<dbReference type="PROSITE" id="PS01230">
    <property type="entry name" value="TRMA_1"/>
    <property type="match status" value="1"/>
</dbReference>
<dbReference type="PROSITE" id="PS01231">
    <property type="entry name" value="TRMA_2"/>
    <property type="match status" value="1"/>
</dbReference>
<proteinExistence type="inferred from homology"/>
<sequence length="445" mass="49770">MARRRKQLPETPEPASIETLSHDGRGIARRDGKTTFIDNALPGEEVMFKFTYMRRKFDEGKAVEIVTASPDRVTPPCEHSTLCGGCSLQHMSPEVQVSRKQAVLREQLAHFGGLEPEEWLAPLTGPVTGYRSKARMGVKYVEAKGETLVGFREKRNSFIAQLHTCEVLIPDVGHRIDELRTLMHGLESRSRIPQIELAAGDDDVALIIRHLDPLSEADQQALLGFCQNLGWHCYLQPGNESTVHRIWPQEGEQRLYYKHPSAGVELAFHPTDFTQVNAEINRKMVPLALDLLDISPDHTVLDLFCGLGNFTIPAAKRAGKVVGVEVSQAMVERGYENARRNSLENLEFHAWDLSQDVSGQAWARQTYDRILIDPPRTGALEMVKLMPRLGASKIVYVSCNPATLARDAGELMALGYRLKAAGVMDMFPHTTHVESIAVFEKMKKK</sequence>